<keyword id="KW-0256">Endoplasmic reticulum</keyword>
<keyword id="KW-0325">Glycoprotein</keyword>
<keyword id="KW-0328">Glycosyltransferase</keyword>
<keyword id="KW-0472">Membrane</keyword>
<keyword id="KW-1185">Reference proteome</keyword>
<keyword id="KW-0677">Repeat</keyword>
<keyword id="KW-0808">Transferase</keyword>
<keyword id="KW-0812">Transmembrane</keyword>
<keyword id="KW-1133">Transmembrane helix</keyword>
<sequence>MNKEHLLKVDPIPDVTIKRGPLRSFLITKPCDNLSSLRTVTSSKEKLLVGCLLIFTAIVRLHNISLPNSVVFGENEVGTFVSQYVNNIFFTDVHPPLVAMLYATVSSVFGYKGLFNYGNIGTEYTANVPYVAMRFFSATLGIVSVLVLYLTLRVSGVKIAVAAICAVCFAIENSFVTLSRFTLIEGPFVFFMACAVYFFRRSELYLPNSCKANKSLLAASIALGFAVSSKWAGLFTIAWAGIIVLWRVWFMIGDLSRPIGSSIKYMAFQFTCLLAIPAFIYFLIFSVHIKTLNVNGISSSFFPAEFRKTLKYNNVIKETVAEVAVGSAVSLNHVGTAGGYLHSHLHNYPAGSMQQQVTLYPHIDQNNKWIIELAEHPNENVTSFQNLTDGTIIKLRQLKNGCRLHSHDHKPPVSQNADWQKEVSCYGYEGFEGDINDDWIIEIDKKRSEPGPAQEHIRAIETKFRLKHYLTGCYLFSHPEKLPEWGFGQQEVTCAYFAREDLTSWYIEENENEISLPNPEKVSYKKMSFWQKFVAIHKFMFYLNNYMDTSHAYSSEPKTWPLMLRGIDFWNENGREVYFLGNAVLWWSVTAFICTFIIGVAVELLAWKLGVNILRDKHIINFHYQVFQYLLGFAAHYFPYFFVGQKLFLYDYLPAYYFGILAFGHALDLISTYISNKRNNTGYIVVAIFMVVCFYFFSEHSPLIYATGWSSNLCKRSKWLGSWDFYCNSLLLSDSHYELNAES</sequence>
<name>PMT5_YEAST</name>
<protein>
    <recommendedName>
        <fullName evidence="7">Dolichyl-phosphate-mannose--protein mannosyltransferase 5</fullName>
        <ecNumber evidence="1">2.4.1.109</ecNumber>
    </recommendedName>
</protein>
<feature type="chain" id="PRO_0000121495" description="Dolichyl-phosphate-mannose--protein mannosyltransferase 5">
    <location>
        <begin position="1"/>
        <end position="743"/>
    </location>
</feature>
<feature type="topological domain" description="Lumenal" evidence="2">
    <location>
        <begin position="1"/>
        <end position="46"/>
    </location>
</feature>
<feature type="transmembrane region" description="Helical" evidence="2">
    <location>
        <begin position="47"/>
        <end position="67"/>
    </location>
</feature>
<feature type="topological domain" description="Cytoplasmic" evidence="2">
    <location>
        <begin position="68"/>
        <end position="129"/>
    </location>
</feature>
<feature type="transmembrane region" description="Helical" evidence="2">
    <location>
        <begin position="130"/>
        <end position="150"/>
    </location>
</feature>
<feature type="topological domain" description="Lumenal" evidence="2">
    <location>
        <begin position="151"/>
        <end position="158"/>
    </location>
</feature>
<feature type="transmembrane region" description="Helical" evidence="2">
    <location>
        <begin position="159"/>
        <end position="179"/>
    </location>
</feature>
<feature type="topological domain" description="Cytoplasmic" evidence="2">
    <location>
        <position position="180"/>
    </location>
</feature>
<feature type="transmembrane region" description="Helical" evidence="2">
    <location>
        <begin position="181"/>
        <end position="201"/>
    </location>
</feature>
<feature type="topological domain" description="Lumenal" evidence="2">
    <location>
        <begin position="202"/>
        <end position="231"/>
    </location>
</feature>
<feature type="transmembrane region" description="Helical" evidence="2">
    <location>
        <begin position="232"/>
        <end position="252"/>
    </location>
</feature>
<feature type="topological domain" description="Cytoplasmic" evidence="2">
    <location>
        <begin position="253"/>
        <end position="264"/>
    </location>
</feature>
<feature type="transmembrane region" description="Helical" evidence="2">
    <location>
        <begin position="265"/>
        <end position="285"/>
    </location>
</feature>
<feature type="topological domain" description="Lumenal" evidence="2">
    <location>
        <begin position="286"/>
        <end position="583"/>
    </location>
</feature>
<feature type="transmembrane region" description="Helical" evidence="2">
    <location>
        <begin position="584"/>
        <end position="604"/>
    </location>
</feature>
<feature type="topological domain" description="Cytoplasmic" evidence="2">
    <location>
        <begin position="605"/>
        <end position="623"/>
    </location>
</feature>
<feature type="transmembrane region" description="Helical" evidence="2">
    <location>
        <begin position="624"/>
        <end position="644"/>
    </location>
</feature>
<feature type="topological domain" description="Lumenal" evidence="2">
    <location>
        <begin position="645"/>
        <end position="646"/>
    </location>
</feature>
<feature type="transmembrane region" description="Helical" evidence="2">
    <location>
        <begin position="647"/>
        <end position="667"/>
    </location>
</feature>
<feature type="topological domain" description="Cytoplasmic" evidence="2">
    <location>
        <begin position="668"/>
        <end position="683"/>
    </location>
</feature>
<feature type="transmembrane region" description="Helical" evidence="2">
    <location>
        <begin position="684"/>
        <end position="704"/>
    </location>
</feature>
<feature type="topological domain" description="Lumenal" evidence="2">
    <location>
        <begin position="705"/>
        <end position="743"/>
    </location>
</feature>
<feature type="domain" description="MIR 1" evidence="3">
    <location>
        <begin position="320"/>
        <end position="374"/>
    </location>
</feature>
<feature type="domain" description="MIR 2" evidence="3">
    <location>
        <begin position="384"/>
        <end position="444"/>
    </location>
</feature>
<feature type="domain" description="MIR 3" evidence="3">
    <location>
        <begin position="454"/>
        <end position="510"/>
    </location>
</feature>
<feature type="glycosylation site" description="N-linked (GlcNAc...) asparagine" evidence="2">
    <location>
        <position position="33"/>
    </location>
</feature>
<feature type="glycosylation site" description="N-linked (GlcNAc...) asparagine" evidence="2">
    <location>
        <position position="213"/>
    </location>
</feature>
<feature type="glycosylation site" description="N-linked (GlcNAc...) asparagine" evidence="2">
    <location>
        <position position="380"/>
    </location>
</feature>
<feature type="glycosylation site" description="N-linked (GlcNAc...) asparagine" evidence="2">
    <location>
        <position position="386"/>
    </location>
</feature>
<comment type="function">
    <text evidence="5">Protein O-mannosyltransferase involved in O-glycosylation which is essential for cell wall rigidity. Forms a heterodimeric complex with PMT3 and more rarely with PMT2 to transfer mannose from Dol-P-mannose to Ser or Thr residues on proteins.</text>
</comment>
<comment type="catalytic activity">
    <reaction evidence="1">
        <text>a di-trans,poly-cis-dolichyl beta-D-mannosyl phosphate + L-seryl-[protein] = 3-O-(alpha-D-mannosyl)-L-seryl-[protein] + a di-trans,poly-cis-dolichyl phosphate + H(+)</text>
        <dbReference type="Rhea" id="RHEA:17377"/>
        <dbReference type="Rhea" id="RHEA-COMP:9863"/>
        <dbReference type="Rhea" id="RHEA-COMP:13546"/>
        <dbReference type="Rhea" id="RHEA-COMP:19498"/>
        <dbReference type="Rhea" id="RHEA-COMP:19501"/>
        <dbReference type="ChEBI" id="CHEBI:15378"/>
        <dbReference type="ChEBI" id="CHEBI:29999"/>
        <dbReference type="ChEBI" id="CHEBI:57683"/>
        <dbReference type="ChEBI" id="CHEBI:58211"/>
        <dbReference type="ChEBI" id="CHEBI:137321"/>
        <dbReference type="EC" id="2.4.1.109"/>
    </reaction>
</comment>
<comment type="catalytic activity">
    <reaction evidence="1">
        <text>a di-trans,poly-cis-dolichyl beta-D-mannosyl phosphate + L-threonyl-[protein] = 3-O-(alpha-D-mannosyl)-L-threonyl-[protein] + a di-trans,poly-cis-dolichyl phosphate + H(+)</text>
        <dbReference type="Rhea" id="RHEA:53396"/>
        <dbReference type="Rhea" id="RHEA-COMP:11060"/>
        <dbReference type="Rhea" id="RHEA-COMP:13547"/>
        <dbReference type="Rhea" id="RHEA-COMP:19498"/>
        <dbReference type="Rhea" id="RHEA-COMP:19501"/>
        <dbReference type="ChEBI" id="CHEBI:15378"/>
        <dbReference type="ChEBI" id="CHEBI:30013"/>
        <dbReference type="ChEBI" id="CHEBI:57683"/>
        <dbReference type="ChEBI" id="CHEBI:58211"/>
        <dbReference type="ChEBI" id="CHEBI:137323"/>
        <dbReference type="EC" id="2.4.1.109"/>
    </reaction>
</comment>
<comment type="pathway">
    <text evidence="7">Protein modification; protein glycosylation.</text>
</comment>
<comment type="subunit">
    <text evidence="4">PMT3 and PMT5 form a functional heterodimer. Also forms a minor complex with PMT2.</text>
</comment>
<comment type="interaction">
    <interactant intactId="EBI-13591">
        <id>P52867</id>
    </interactant>
    <interactant intactId="EBI-13573">
        <id>P31382</id>
        <label>PMT2</label>
    </interactant>
    <organismsDiffer>false</organismsDiffer>
    <experiments>2</experiments>
</comment>
<comment type="subcellular location">
    <subcellularLocation>
        <location evidence="1">Endoplasmic reticulum membrane</location>
        <topology evidence="2">Multi-pass membrane protein</topology>
    </subcellularLocation>
</comment>
<comment type="similarity">
    <text evidence="7">Belongs to the glycosyltransferase 39 family.</text>
</comment>
<reference key="1">
    <citation type="submission" date="1996-08" db="EMBL/GenBank/DDBJ databases">
        <authorList>
            <person name="Dommaschk U."/>
        </authorList>
    </citation>
    <scope>NUCLEOTIDE SEQUENCE [GENOMIC DNA]</scope>
    <source>
        <strain>ATCC 204508 / S288c</strain>
    </source>
</reference>
<reference key="2">
    <citation type="journal article" date="1996" name="Yeast">
        <title>The sequence of a 16,691 bp segment of Saccharomyces cerevisiae chromosome IV identifies the DUN1, PMT1, PMT5, SRP14 and DPR1 genes, and five new open reading frames.</title>
        <authorList>
            <person name="Boskovic J."/>
            <person name="Soler-Mira A."/>
            <person name="Garcia-Cantalejo J.M."/>
            <person name="Ballesta J.P.G."/>
            <person name="Jimenez A."/>
            <person name="Remacha M.A."/>
        </authorList>
    </citation>
    <scope>NUCLEOTIDE SEQUENCE [GENOMIC DNA]</scope>
    <source>
        <strain>ATCC 96604 / S288c / FY1679</strain>
    </source>
</reference>
<reference key="3">
    <citation type="journal article" date="1997" name="Nature">
        <title>The nucleotide sequence of Saccharomyces cerevisiae chromosome IV.</title>
        <authorList>
            <person name="Jacq C."/>
            <person name="Alt-Moerbe J."/>
            <person name="Andre B."/>
            <person name="Arnold W."/>
            <person name="Bahr A."/>
            <person name="Ballesta J.P.G."/>
            <person name="Bargues M."/>
            <person name="Baron L."/>
            <person name="Becker A."/>
            <person name="Biteau N."/>
            <person name="Bloecker H."/>
            <person name="Blugeon C."/>
            <person name="Boskovic J."/>
            <person name="Brandt P."/>
            <person name="Brueckner M."/>
            <person name="Buitrago M.J."/>
            <person name="Coster F."/>
            <person name="Delaveau T."/>
            <person name="del Rey F."/>
            <person name="Dujon B."/>
            <person name="Eide L.G."/>
            <person name="Garcia-Cantalejo J.M."/>
            <person name="Goffeau A."/>
            <person name="Gomez-Peris A."/>
            <person name="Granotier C."/>
            <person name="Hanemann V."/>
            <person name="Hankeln T."/>
            <person name="Hoheisel J.D."/>
            <person name="Jaeger W."/>
            <person name="Jimenez A."/>
            <person name="Jonniaux J.-L."/>
            <person name="Kraemer C."/>
            <person name="Kuester H."/>
            <person name="Laamanen P."/>
            <person name="Legros Y."/>
            <person name="Louis E.J."/>
            <person name="Moeller-Rieker S."/>
            <person name="Monnet A."/>
            <person name="Moro M."/>
            <person name="Mueller-Auer S."/>
            <person name="Nussbaumer B."/>
            <person name="Paricio N."/>
            <person name="Paulin L."/>
            <person name="Perea J."/>
            <person name="Perez-Alonso M."/>
            <person name="Perez-Ortin J.E."/>
            <person name="Pohl T.M."/>
            <person name="Prydz H."/>
            <person name="Purnelle B."/>
            <person name="Rasmussen S.W."/>
            <person name="Remacha M.A."/>
            <person name="Revuelta J.L."/>
            <person name="Rieger M."/>
            <person name="Salom D."/>
            <person name="Saluz H.P."/>
            <person name="Saiz J.E."/>
            <person name="Saren A.-M."/>
            <person name="Schaefer M."/>
            <person name="Scharfe M."/>
            <person name="Schmidt E.R."/>
            <person name="Schneider C."/>
            <person name="Scholler P."/>
            <person name="Schwarz S."/>
            <person name="Soler-Mira A."/>
            <person name="Urrestarazu L.A."/>
            <person name="Verhasselt P."/>
            <person name="Vissers S."/>
            <person name="Voet M."/>
            <person name="Volckaert G."/>
            <person name="Wagner G."/>
            <person name="Wambutt R."/>
            <person name="Wedler E."/>
            <person name="Wedler H."/>
            <person name="Woelfl S."/>
            <person name="Harris D.E."/>
            <person name="Bowman S."/>
            <person name="Brown D."/>
            <person name="Churcher C.M."/>
            <person name="Connor R."/>
            <person name="Dedman K."/>
            <person name="Gentles S."/>
            <person name="Hamlin N."/>
            <person name="Hunt S."/>
            <person name="Jones L."/>
            <person name="McDonald S."/>
            <person name="Murphy L.D."/>
            <person name="Niblett D."/>
            <person name="Odell C."/>
            <person name="Oliver K."/>
            <person name="Rajandream M.A."/>
            <person name="Richards C."/>
            <person name="Shore L."/>
            <person name="Walsh S.V."/>
            <person name="Barrell B.G."/>
            <person name="Dietrich F.S."/>
            <person name="Mulligan J.T."/>
            <person name="Allen E."/>
            <person name="Araujo R."/>
            <person name="Aviles E."/>
            <person name="Berno A."/>
            <person name="Carpenter J."/>
            <person name="Chen E."/>
            <person name="Cherry J.M."/>
            <person name="Chung E."/>
            <person name="Duncan M."/>
            <person name="Hunicke-Smith S."/>
            <person name="Hyman R.W."/>
            <person name="Komp C."/>
            <person name="Lashkari D."/>
            <person name="Lew H."/>
            <person name="Lin D."/>
            <person name="Mosedale D."/>
            <person name="Nakahara K."/>
            <person name="Namath A."/>
            <person name="Oefner P."/>
            <person name="Oh C."/>
            <person name="Petel F.X."/>
            <person name="Roberts D."/>
            <person name="Schramm S."/>
            <person name="Schroeder M."/>
            <person name="Shogren T."/>
            <person name="Shroff N."/>
            <person name="Winant A."/>
            <person name="Yelton M.A."/>
            <person name="Botstein D."/>
            <person name="Davis R.W."/>
            <person name="Johnston M."/>
            <person name="Andrews S."/>
            <person name="Brinkman R."/>
            <person name="Cooper J."/>
            <person name="Ding H."/>
            <person name="Du Z."/>
            <person name="Favello A."/>
            <person name="Fulton L."/>
            <person name="Gattung S."/>
            <person name="Greco T."/>
            <person name="Hallsworth K."/>
            <person name="Hawkins J."/>
            <person name="Hillier L.W."/>
            <person name="Jier M."/>
            <person name="Johnson D."/>
            <person name="Johnston L."/>
            <person name="Kirsten J."/>
            <person name="Kucaba T."/>
            <person name="Langston Y."/>
            <person name="Latreille P."/>
            <person name="Le T."/>
            <person name="Mardis E."/>
            <person name="Menezes S."/>
            <person name="Miller N."/>
            <person name="Nhan M."/>
            <person name="Pauley A."/>
            <person name="Peluso D."/>
            <person name="Rifkin L."/>
            <person name="Riles L."/>
            <person name="Taich A."/>
            <person name="Trevaskis E."/>
            <person name="Vignati D."/>
            <person name="Wilcox L."/>
            <person name="Wohldman P."/>
            <person name="Vaudin M."/>
            <person name="Wilson R."/>
            <person name="Waterston R."/>
            <person name="Albermann K."/>
            <person name="Hani J."/>
            <person name="Heumann K."/>
            <person name="Kleine K."/>
            <person name="Mewes H.-W."/>
            <person name="Zollner A."/>
            <person name="Zaccaria P."/>
        </authorList>
    </citation>
    <scope>NUCLEOTIDE SEQUENCE [LARGE SCALE GENOMIC DNA]</scope>
    <source>
        <strain>ATCC 204508 / S288c</strain>
    </source>
</reference>
<reference key="4">
    <citation type="journal article" date="2014" name="G3 (Bethesda)">
        <title>The reference genome sequence of Saccharomyces cerevisiae: Then and now.</title>
        <authorList>
            <person name="Engel S.R."/>
            <person name="Dietrich F.S."/>
            <person name="Fisk D.G."/>
            <person name="Binkley G."/>
            <person name="Balakrishnan R."/>
            <person name="Costanzo M.C."/>
            <person name="Dwight S.S."/>
            <person name="Hitz B.C."/>
            <person name="Karra K."/>
            <person name="Nash R.S."/>
            <person name="Weng S."/>
            <person name="Wong E.D."/>
            <person name="Lloyd P."/>
            <person name="Skrzypek M.S."/>
            <person name="Miyasato S.R."/>
            <person name="Simison M."/>
            <person name="Cherry J.M."/>
        </authorList>
    </citation>
    <scope>GENOME REANNOTATION</scope>
    <source>
        <strain>ATCC 204508 / S288c</strain>
    </source>
</reference>
<reference key="5">
    <citation type="journal article" date="2003" name="J. Biol. Chem.">
        <title>Members of the evolutionarily conserved PMT family of protein O-mannosyltransferases form distinct protein complexes among themselves.</title>
        <authorList>
            <person name="Girrbach V."/>
            <person name="Strahl S."/>
        </authorList>
    </citation>
    <scope>INTERACTION WITH PMT3 AND PMT2</scope>
</reference>
<reference key="6">
    <citation type="journal article" date="2006" name="Proc. Natl. Acad. Sci. U.S.A.">
        <title>A global topology map of the Saccharomyces cerevisiae membrane proteome.</title>
        <authorList>
            <person name="Kim H."/>
            <person name="Melen K."/>
            <person name="Oesterberg M."/>
            <person name="von Heijne G."/>
        </authorList>
    </citation>
    <scope>TOPOLOGY [LARGE SCALE ANALYSIS]</scope>
    <source>
        <strain>ATCC 208353 / W303-1A</strain>
    </source>
</reference>
<accession>P52867</accession>
<accession>D6VRQ5</accession>
<accession>Q92181</accession>
<dbReference type="EC" id="2.4.1.109" evidence="1"/>
<dbReference type="EMBL" id="X92759">
    <property type="protein sequence ID" value="CAA63414.1"/>
    <property type="molecule type" value="Genomic_DNA"/>
</dbReference>
<dbReference type="EMBL" id="X95644">
    <property type="protein sequence ID" value="CAA64918.1"/>
    <property type="molecule type" value="Genomic_DNA"/>
</dbReference>
<dbReference type="EMBL" id="Z74142">
    <property type="protein sequence ID" value="CAA98661.1"/>
    <property type="molecule type" value="Genomic_DNA"/>
</dbReference>
<dbReference type="EMBL" id="BK006938">
    <property type="protein sequence ID" value="DAA11765.1"/>
    <property type="molecule type" value="Genomic_DNA"/>
</dbReference>
<dbReference type="PIR" id="S67635">
    <property type="entry name" value="S67635"/>
</dbReference>
<dbReference type="RefSeq" id="NP_010190.1">
    <property type="nucleotide sequence ID" value="NM_001180152.1"/>
</dbReference>
<dbReference type="SMR" id="P52867"/>
<dbReference type="BioGRID" id="31967">
    <property type="interactions" value="104"/>
</dbReference>
<dbReference type="ComplexPortal" id="CPX-3038">
    <property type="entry name" value="PMT5-PMT2 dolichyl-phosphate-mannose-protein mannosyltransferase complex"/>
</dbReference>
<dbReference type="ComplexPortal" id="CPX-3040">
    <property type="entry name" value="PMT5-PMT3 dolichyl-phosphate-mannose-protein mannosyltransferase complex"/>
</dbReference>
<dbReference type="DIP" id="DIP-5025N"/>
<dbReference type="FunCoup" id="P52867">
    <property type="interactions" value="35"/>
</dbReference>
<dbReference type="IntAct" id="P52867">
    <property type="interactions" value="5"/>
</dbReference>
<dbReference type="MINT" id="P52867"/>
<dbReference type="STRING" id="4932.YDL093W"/>
<dbReference type="CAZy" id="GT39">
    <property type="family name" value="Glycosyltransferase Family 39"/>
</dbReference>
<dbReference type="GlyCosmos" id="P52867">
    <property type="glycosylation" value="4 sites, No reported glycans"/>
</dbReference>
<dbReference type="GlyGen" id="P52867">
    <property type="glycosylation" value="4 sites"/>
</dbReference>
<dbReference type="iPTMnet" id="P52867"/>
<dbReference type="PaxDb" id="4932-YDL093W"/>
<dbReference type="PeptideAtlas" id="P52867"/>
<dbReference type="EnsemblFungi" id="YDL093W_mRNA">
    <property type="protein sequence ID" value="YDL093W"/>
    <property type="gene ID" value="YDL093W"/>
</dbReference>
<dbReference type="GeneID" id="851464"/>
<dbReference type="KEGG" id="sce:YDL093W"/>
<dbReference type="AGR" id="SGD:S000002251"/>
<dbReference type="SGD" id="S000002251">
    <property type="gene designation" value="PMT5"/>
</dbReference>
<dbReference type="VEuPathDB" id="FungiDB:YDL093W"/>
<dbReference type="eggNOG" id="KOG3359">
    <property type="taxonomic scope" value="Eukaryota"/>
</dbReference>
<dbReference type="GeneTree" id="ENSGT00940000176667"/>
<dbReference type="HOGENOM" id="CLU_008438_2_1_1"/>
<dbReference type="InParanoid" id="P52867"/>
<dbReference type="OMA" id="MEFANDI"/>
<dbReference type="OrthoDB" id="292747at2759"/>
<dbReference type="BioCyc" id="YEAST:YDL093W-MONOMER"/>
<dbReference type="BRENDA" id="2.4.1.109">
    <property type="organism ID" value="984"/>
</dbReference>
<dbReference type="UniPathway" id="UPA00378"/>
<dbReference type="BioGRID-ORCS" id="851464">
    <property type="hits" value="2 hits in 10 CRISPR screens"/>
</dbReference>
<dbReference type="PRO" id="PR:P52867"/>
<dbReference type="Proteomes" id="UP000002311">
    <property type="component" value="Chromosome IV"/>
</dbReference>
<dbReference type="RNAct" id="P52867">
    <property type="molecule type" value="protein"/>
</dbReference>
<dbReference type="GO" id="GO:0097584">
    <property type="term" value="C:dolichyl-phosphate-mannose-protein mannosyltransferase Pmt5p-Pmt2p dimer complex"/>
    <property type="evidence" value="ECO:0000314"/>
    <property type="project" value="SGD"/>
</dbReference>
<dbReference type="GO" id="GO:0097585">
    <property type="term" value="C:dolichyl-phosphate-mannose-protein mannosyltransferase Pmt5p-Pmt3p dimer complex"/>
    <property type="evidence" value="ECO:0000314"/>
    <property type="project" value="SGD"/>
</dbReference>
<dbReference type="GO" id="GO:0005783">
    <property type="term" value="C:endoplasmic reticulum"/>
    <property type="evidence" value="ECO:0007005"/>
    <property type="project" value="SGD"/>
</dbReference>
<dbReference type="GO" id="GO:0005789">
    <property type="term" value="C:endoplasmic reticulum membrane"/>
    <property type="evidence" value="ECO:0000250"/>
    <property type="project" value="ComplexPortal"/>
</dbReference>
<dbReference type="GO" id="GO:0004169">
    <property type="term" value="F:dolichyl-phosphate-mannose-protein mannosyltransferase activity"/>
    <property type="evidence" value="ECO:0000250"/>
    <property type="project" value="SGD"/>
</dbReference>
<dbReference type="GO" id="GO:0009272">
    <property type="term" value="P:fungal-type cell wall biogenesis"/>
    <property type="evidence" value="ECO:0000250"/>
    <property type="project" value="ComplexPortal"/>
</dbReference>
<dbReference type="GO" id="GO:0035269">
    <property type="term" value="P:protein O-linked mannosylation"/>
    <property type="evidence" value="ECO:0000250"/>
    <property type="project" value="SGD"/>
</dbReference>
<dbReference type="GO" id="GO:1900101">
    <property type="term" value="P:regulation of endoplasmic reticulum unfolded protein response"/>
    <property type="evidence" value="ECO:0000303"/>
    <property type="project" value="ComplexPortal"/>
</dbReference>
<dbReference type="CDD" id="cd23283">
    <property type="entry name" value="beta-trefoil_MIR_PMT1-like"/>
    <property type="match status" value="1"/>
</dbReference>
<dbReference type="FunFam" id="2.80.10.50:FF:000034">
    <property type="entry name" value="Dolichyl-phosphate-mannose-protein mannosyltransferase 1"/>
    <property type="match status" value="1"/>
</dbReference>
<dbReference type="Gene3D" id="2.80.10.50">
    <property type="match status" value="1"/>
</dbReference>
<dbReference type="InterPro" id="IPR027005">
    <property type="entry name" value="GlyclTrfase_39-like"/>
</dbReference>
<dbReference type="InterPro" id="IPR003342">
    <property type="entry name" value="Glyco_trans_39/83"/>
</dbReference>
<dbReference type="InterPro" id="IPR036300">
    <property type="entry name" value="MIR_dom_sf"/>
</dbReference>
<dbReference type="InterPro" id="IPR016093">
    <property type="entry name" value="MIR_motif"/>
</dbReference>
<dbReference type="InterPro" id="IPR032421">
    <property type="entry name" value="PMT_4TMC"/>
</dbReference>
<dbReference type="PANTHER" id="PTHR10050">
    <property type="entry name" value="DOLICHYL-PHOSPHATE-MANNOSE--PROTEIN MANNOSYLTRANSFERASE"/>
    <property type="match status" value="1"/>
</dbReference>
<dbReference type="PANTHER" id="PTHR10050:SF50">
    <property type="entry name" value="DOLICHYL-PHOSPHATE-MANNOSE--PROTEIN MANNOSYLTRANSFERASE 1-RELATED"/>
    <property type="match status" value="1"/>
</dbReference>
<dbReference type="Pfam" id="PF02815">
    <property type="entry name" value="MIR"/>
    <property type="match status" value="1"/>
</dbReference>
<dbReference type="Pfam" id="PF02366">
    <property type="entry name" value="PMT"/>
    <property type="match status" value="1"/>
</dbReference>
<dbReference type="Pfam" id="PF16192">
    <property type="entry name" value="PMT_4TMC"/>
    <property type="match status" value="1"/>
</dbReference>
<dbReference type="SMART" id="SM00472">
    <property type="entry name" value="MIR"/>
    <property type="match status" value="3"/>
</dbReference>
<dbReference type="SUPFAM" id="SSF82109">
    <property type="entry name" value="MIR domain"/>
    <property type="match status" value="1"/>
</dbReference>
<dbReference type="PROSITE" id="PS50919">
    <property type="entry name" value="MIR"/>
    <property type="match status" value="3"/>
</dbReference>
<evidence type="ECO:0000250" key="1">
    <source>
        <dbReference type="UniProtKB" id="P33775"/>
    </source>
</evidence>
<evidence type="ECO:0000255" key="2"/>
<evidence type="ECO:0000255" key="3">
    <source>
        <dbReference type="PROSITE-ProRule" id="PRU00131"/>
    </source>
</evidence>
<evidence type="ECO:0000269" key="4">
    <source>
    </source>
</evidence>
<evidence type="ECO:0000303" key="5">
    <source>
    </source>
</evidence>
<evidence type="ECO:0000303" key="6">
    <source>
    </source>
</evidence>
<evidence type="ECO:0000305" key="7"/>
<evidence type="ECO:0000312" key="8">
    <source>
        <dbReference type="SGD" id="S000002251"/>
    </source>
</evidence>
<gene>
    <name evidence="6" type="primary">PMT5</name>
    <name evidence="8" type="ordered locus">YDL093W</name>
    <name evidence="6" type="ORF">D2399</name>
</gene>
<organism>
    <name type="scientific">Saccharomyces cerevisiae (strain ATCC 204508 / S288c)</name>
    <name type="common">Baker's yeast</name>
    <dbReference type="NCBI Taxonomy" id="559292"/>
    <lineage>
        <taxon>Eukaryota</taxon>
        <taxon>Fungi</taxon>
        <taxon>Dikarya</taxon>
        <taxon>Ascomycota</taxon>
        <taxon>Saccharomycotina</taxon>
        <taxon>Saccharomycetes</taxon>
        <taxon>Saccharomycetales</taxon>
        <taxon>Saccharomycetaceae</taxon>
        <taxon>Saccharomyces</taxon>
    </lineage>
</organism>
<proteinExistence type="evidence at protein level"/>